<protein>
    <recommendedName>
        <fullName>Ubiquitin-conjugating enzyme E2 G1</fullName>
        <ecNumber evidence="5">2.3.2.23</ecNumber>
    </recommendedName>
    <alternativeName>
        <fullName>E2 ubiquitin-conjugating enzyme G1</fullName>
    </alternativeName>
    <alternativeName>
        <fullName>E217K</fullName>
    </alternativeName>
    <alternativeName>
        <fullName>UBC7</fullName>
    </alternativeName>
    <alternativeName>
        <fullName>Ubiquitin carrier protein G1</fullName>
    </alternativeName>
    <alternativeName>
        <fullName>Ubiquitin-protein ligase G1</fullName>
    </alternativeName>
    <component>
        <recommendedName>
            <fullName>Ubiquitin-conjugating enzyme E2 G1, N-terminally processed</fullName>
        </recommendedName>
    </component>
</protein>
<comment type="function">
    <text evidence="4 5">Accepts ubiquitin from the E1 complex and catalyzes its covalent attachment to other proteins. In vitro catalyzes 'Lys-48'-, as well as 'Lys-63'-linked polyubiquitination. May be involved in degradation of muscle-specific proteins. Mediates polyubiquitination of CYP3A4.</text>
</comment>
<comment type="catalytic activity">
    <reaction evidence="1 2 5">
        <text>S-ubiquitinyl-[E1 ubiquitin-activating enzyme]-L-cysteine + [E2 ubiquitin-conjugating enzyme]-L-cysteine = [E1 ubiquitin-activating enzyme]-L-cysteine + S-ubiquitinyl-[E2 ubiquitin-conjugating enzyme]-L-cysteine.</text>
        <dbReference type="EC" id="2.3.2.23"/>
    </reaction>
</comment>
<comment type="pathway">
    <text evidence="1">Protein modification; protein ubiquitination.</text>
</comment>
<comment type="interaction">
    <interactant intactId="EBI-2340619">
        <id>P62253</id>
    </interactant>
    <interactant intactId="EBI-6624398">
        <id>P06307</id>
        <label>CCK</label>
    </interactant>
    <organismsDiffer>false</organismsDiffer>
    <experiments>3</experiments>
</comment>
<comment type="interaction">
    <interactant intactId="EBI-2340619">
        <id>P62253</id>
    </interactant>
    <interactant intactId="EBI-356942">
        <id>P62879</id>
        <label>GNB2</label>
    </interactant>
    <organismsDiffer>false</organismsDiffer>
    <experiments>3</experiments>
</comment>
<comment type="interaction">
    <interactant intactId="EBI-2340619">
        <id>P62253</id>
    </interactant>
    <interactant intactId="EBI-21591415">
        <id>P13473-2</id>
        <label>LAMP2</label>
    </interactant>
    <organismsDiffer>false</organismsDiffer>
    <experiments>3</experiments>
</comment>
<comment type="interaction">
    <interactant intactId="EBI-2340619">
        <id>P62253</id>
    </interactant>
    <interactant intactId="EBI-5280197">
        <id>O75400-2</id>
        <label>PRPF40A</label>
    </interactant>
    <organismsDiffer>false</organismsDiffer>
    <experiments>3</experiments>
</comment>
<comment type="interaction">
    <interactant intactId="EBI-2340619">
        <id>P62253</id>
    </interactant>
    <interactant intactId="EBI-2623095">
        <id>Q9Y371</id>
        <label>SH3GLB1</label>
    </interactant>
    <organismsDiffer>false</organismsDiffer>
    <experiments>3</experiments>
</comment>
<comment type="tissue specificity">
    <text evidence="7">Widely expressed, mainly in skeletal muscle.</text>
</comment>
<comment type="PTM">
    <text evidence="6">Autoubiquitinated in vitro.</text>
</comment>
<comment type="similarity">
    <text evidence="1">Belongs to the ubiquitin-conjugating enzyme family.</text>
</comment>
<comment type="sequence caution" evidence="8">
    <conflict type="erroneous initiation">
        <sequence resource="EMBL-CDS" id="AAH26288"/>
    </conflict>
</comment>
<accession>P62253</accession>
<accession>B2R7P2</accession>
<accession>D3DTK0</accession>
<accession>Q99462</accession>
<name>UB2G1_HUMAN</name>
<dbReference type="EC" id="2.3.2.23" evidence="5"/>
<dbReference type="EMBL" id="D78514">
    <property type="protein sequence ID" value="BAA11410.1"/>
    <property type="molecule type" value="mRNA"/>
</dbReference>
<dbReference type="EMBL" id="BT007416">
    <property type="protein sequence ID" value="AAP36084.1"/>
    <property type="molecule type" value="mRNA"/>
</dbReference>
<dbReference type="EMBL" id="AK313059">
    <property type="protein sequence ID" value="BAG35889.1"/>
    <property type="molecule type" value="mRNA"/>
</dbReference>
<dbReference type="EMBL" id="CH471108">
    <property type="protein sequence ID" value="EAW90445.1"/>
    <property type="molecule type" value="Genomic_DNA"/>
</dbReference>
<dbReference type="EMBL" id="CH471108">
    <property type="protein sequence ID" value="EAW90446.1"/>
    <property type="molecule type" value="Genomic_DNA"/>
</dbReference>
<dbReference type="EMBL" id="BC002775">
    <property type="protein sequence ID" value="AAH02775.1"/>
    <property type="molecule type" value="mRNA"/>
</dbReference>
<dbReference type="EMBL" id="BC026288">
    <property type="protein sequence ID" value="AAH26288.2"/>
    <property type="status" value="ALT_INIT"/>
    <property type="molecule type" value="mRNA"/>
</dbReference>
<dbReference type="CCDS" id="CCDS32532.1"/>
<dbReference type="RefSeq" id="NP_003333.1">
    <property type="nucleotide sequence ID" value="NM_003342.5"/>
</dbReference>
<dbReference type="PDB" id="2AWF">
    <property type="method" value="X-ray"/>
    <property type="resolution" value="2.10 A"/>
    <property type="chains" value="A=8-160"/>
</dbReference>
<dbReference type="PDB" id="6D68">
    <property type="method" value="X-ray"/>
    <property type="resolution" value="2.36 A"/>
    <property type="chains" value="A/B=1-170"/>
</dbReference>
<dbReference type="PDBsum" id="2AWF"/>
<dbReference type="PDBsum" id="6D68"/>
<dbReference type="SMR" id="P62253"/>
<dbReference type="BioGRID" id="113174">
    <property type="interactions" value="41"/>
</dbReference>
<dbReference type="FunCoup" id="P62253">
    <property type="interactions" value="2014"/>
</dbReference>
<dbReference type="IntAct" id="P62253">
    <property type="interactions" value="11"/>
</dbReference>
<dbReference type="STRING" id="9606.ENSP00000380178"/>
<dbReference type="GlyGen" id="P62253">
    <property type="glycosylation" value="3 sites, 1 O-linked glycan (1 site)"/>
</dbReference>
<dbReference type="iPTMnet" id="P62253"/>
<dbReference type="PhosphoSitePlus" id="P62253"/>
<dbReference type="SwissPalm" id="P62253"/>
<dbReference type="BioMuta" id="UBE2G1"/>
<dbReference type="DMDM" id="51338681"/>
<dbReference type="jPOST" id="P62253"/>
<dbReference type="MassIVE" id="P62253"/>
<dbReference type="PaxDb" id="9606-ENSP00000380178"/>
<dbReference type="PeptideAtlas" id="P62253"/>
<dbReference type="ProteomicsDB" id="57375"/>
<dbReference type="Pumba" id="P62253"/>
<dbReference type="Antibodypedia" id="1153">
    <property type="antibodies" value="235 antibodies from 31 providers"/>
</dbReference>
<dbReference type="DNASU" id="7326"/>
<dbReference type="Ensembl" id="ENST00000396981.7">
    <property type="protein sequence ID" value="ENSP00000380178.2"/>
    <property type="gene ID" value="ENSG00000132388.13"/>
</dbReference>
<dbReference type="GeneID" id="7326"/>
<dbReference type="KEGG" id="hsa:7326"/>
<dbReference type="MANE-Select" id="ENST00000396981.7">
    <property type="protein sequence ID" value="ENSP00000380178.2"/>
    <property type="RefSeq nucleotide sequence ID" value="NM_003342.5"/>
    <property type="RefSeq protein sequence ID" value="NP_003333.1"/>
</dbReference>
<dbReference type="UCSC" id="uc002fxs.4">
    <property type="organism name" value="human"/>
</dbReference>
<dbReference type="AGR" id="HGNC:12482"/>
<dbReference type="CTD" id="7326"/>
<dbReference type="DisGeNET" id="7326"/>
<dbReference type="GeneCards" id="UBE2G1"/>
<dbReference type="HGNC" id="HGNC:12482">
    <property type="gene designation" value="UBE2G1"/>
</dbReference>
<dbReference type="HPA" id="ENSG00000132388">
    <property type="expression patterns" value="Tissue enhanced (skeletal)"/>
</dbReference>
<dbReference type="MIM" id="601569">
    <property type="type" value="gene"/>
</dbReference>
<dbReference type="neXtProt" id="NX_P62253"/>
<dbReference type="OpenTargets" id="ENSG00000132388"/>
<dbReference type="PharmGKB" id="PA37131"/>
<dbReference type="VEuPathDB" id="HostDB:ENSG00000132388"/>
<dbReference type="eggNOG" id="KOG0425">
    <property type="taxonomic scope" value="Eukaryota"/>
</dbReference>
<dbReference type="GeneTree" id="ENSGT00940000155228"/>
<dbReference type="HOGENOM" id="CLU_030988_10_1_1"/>
<dbReference type="InParanoid" id="P62253"/>
<dbReference type="OMA" id="MFEWEVM"/>
<dbReference type="OrthoDB" id="9515367at2759"/>
<dbReference type="PAN-GO" id="P62253">
    <property type="GO annotations" value="3 GO annotations based on evolutionary models"/>
</dbReference>
<dbReference type="PhylomeDB" id="P62253"/>
<dbReference type="TreeFam" id="TF101118"/>
<dbReference type="BRENDA" id="2.3.2.23">
    <property type="organism ID" value="2681"/>
</dbReference>
<dbReference type="BRENDA" id="2.3.2.24">
    <property type="organism ID" value="2681"/>
</dbReference>
<dbReference type="PathwayCommons" id="P62253"/>
<dbReference type="Reactome" id="R-HSA-8866652">
    <property type="pathway name" value="Synthesis of active ubiquitin: roles of E1 and E2 enzymes"/>
</dbReference>
<dbReference type="Reactome" id="R-HSA-983168">
    <property type="pathway name" value="Antigen processing: Ubiquitination &amp; Proteasome degradation"/>
</dbReference>
<dbReference type="SignaLink" id="P62253"/>
<dbReference type="SIGNOR" id="P62253"/>
<dbReference type="UniPathway" id="UPA00143"/>
<dbReference type="BioGRID-ORCS" id="7326">
    <property type="hits" value="38 hits in 1161 CRISPR screens"/>
</dbReference>
<dbReference type="ChiTaRS" id="UBE2G1">
    <property type="organism name" value="human"/>
</dbReference>
<dbReference type="EvolutionaryTrace" id="P62253"/>
<dbReference type="GeneWiki" id="UBE2G1"/>
<dbReference type="GenomeRNAi" id="7326"/>
<dbReference type="Pharos" id="P62253">
    <property type="development level" value="Tbio"/>
</dbReference>
<dbReference type="PRO" id="PR:P62253"/>
<dbReference type="Proteomes" id="UP000005640">
    <property type="component" value="Chromosome 17"/>
</dbReference>
<dbReference type="RNAct" id="P62253">
    <property type="molecule type" value="protein"/>
</dbReference>
<dbReference type="Bgee" id="ENSG00000132388">
    <property type="expression patterns" value="Expressed in sperm and 210 other cell types or tissues"/>
</dbReference>
<dbReference type="ExpressionAtlas" id="P62253">
    <property type="expression patterns" value="baseline and differential"/>
</dbReference>
<dbReference type="GO" id="GO:0005829">
    <property type="term" value="C:cytosol"/>
    <property type="evidence" value="ECO:0000304"/>
    <property type="project" value="Reactome"/>
</dbReference>
<dbReference type="GO" id="GO:0070062">
    <property type="term" value="C:extracellular exosome"/>
    <property type="evidence" value="ECO:0007005"/>
    <property type="project" value="UniProtKB"/>
</dbReference>
<dbReference type="GO" id="GO:0005524">
    <property type="term" value="F:ATP binding"/>
    <property type="evidence" value="ECO:0007669"/>
    <property type="project" value="UniProtKB-KW"/>
</dbReference>
<dbReference type="GO" id="GO:0061631">
    <property type="term" value="F:ubiquitin conjugating enzyme activity"/>
    <property type="evidence" value="ECO:0000314"/>
    <property type="project" value="ParkinsonsUK-UCL"/>
</dbReference>
<dbReference type="GO" id="GO:0031625">
    <property type="term" value="F:ubiquitin protein ligase binding"/>
    <property type="evidence" value="ECO:0000353"/>
    <property type="project" value="UniProtKB"/>
</dbReference>
<dbReference type="GO" id="GO:0004842">
    <property type="term" value="F:ubiquitin-protein transferase activity"/>
    <property type="evidence" value="ECO:0000314"/>
    <property type="project" value="UniProtKB"/>
</dbReference>
<dbReference type="GO" id="GO:0043161">
    <property type="term" value="P:proteasome-mediated ubiquitin-dependent protein catabolic process"/>
    <property type="evidence" value="ECO:0000318"/>
    <property type="project" value="GO_Central"/>
</dbReference>
<dbReference type="GO" id="GO:0070936">
    <property type="term" value="P:protein K48-linked ubiquitination"/>
    <property type="evidence" value="ECO:0000314"/>
    <property type="project" value="UniProtKB"/>
</dbReference>
<dbReference type="GO" id="GO:0070534">
    <property type="term" value="P:protein K63-linked ubiquitination"/>
    <property type="evidence" value="ECO:0000314"/>
    <property type="project" value="UniProtKB"/>
</dbReference>
<dbReference type="GO" id="GO:0000209">
    <property type="term" value="P:protein polyubiquitination"/>
    <property type="evidence" value="ECO:0000318"/>
    <property type="project" value="GO_Central"/>
</dbReference>
<dbReference type="GO" id="GO:0006511">
    <property type="term" value="P:ubiquitin-dependent protein catabolic process"/>
    <property type="evidence" value="ECO:0000304"/>
    <property type="project" value="ProtInc"/>
</dbReference>
<dbReference type="CDD" id="cd23795">
    <property type="entry name" value="UBCc_UBE2G1"/>
    <property type="match status" value="1"/>
</dbReference>
<dbReference type="FunFam" id="3.10.110.10:FF:000018">
    <property type="entry name" value="Ubiquitin-conjugating enzyme E2 G1"/>
    <property type="match status" value="1"/>
</dbReference>
<dbReference type="Gene3D" id="3.10.110.10">
    <property type="entry name" value="Ubiquitin Conjugating Enzyme"/>
    <property type="match status" value="1"/>
</dbReference>
<dbReference type="IDEAL" id="IID00634"/>
<dbReference type="InterPro" id="IPR050113">
    <property type="entry name" value="Ub_conjugating_enzyme"/>
</dbReference>
<dbReference type="InterPro" id="IPR000608">
    <property type="entry name" value="UBQ-conjugat_E2_core"/>
</dbReference>
<dbReference type="InterPro" id="IPR023313">
    <property type="entry name" value="UBQ-conjugating_AS"/>
</dbReference>
<dbReference type="InterPro" id="IPR016135">
    <property type="entry name" value="UBQ-conjugating_enzyme/RWD"/>
</dbReference>
<dbReference type="PANTHER" id="PTHR24067">
    <property type="entry name" value="UBIQUITIN-CONJUGATING ENZYME E2"/>
    <property type="match status" value="1"/>
</dbReference>
<dbReference type="Pfam" id="PF00179">
    <property type="entry name" value="UQ_con"/>
    <property type="match status" value="1"/>
</dbReference>
<dbReference type="SMART" id="SM00212">
    <property type="entry name" value="UBCc"/>
    <property type="match status" value="1"/>
</dbReference>
<dbReference type="SUPFAM" id="SSF54495">
    <property type="entry name" value="UBC-like"/>
    <property type="match status" value="1"/>
</dbReference>
<dbReference type="PROSITE" id="PS00183">
    <property type="entry name" value="UBC_1"/>
    <property type="match status" value="1"/>
</dbReference>
<dbReference type="PROSITE" id="PS50127">
    <property type="entry name" value="UBC_2"/>
    <property type="match status" value="1"/>
</dbReference>
<evidence type="ECO:0000255" key="1">
    <source>
        <dbReference type="PROSITE-ProRule" id="PRU00388"/>
    </source>
</evidence>
<evidence type="ECO:0000255" key="2">
    <source>
        <dbReference type="PROSITE-ProRule" id="PRU10133"/>
    </source>
</evidence>
<evidence type="ECO:0000269" key="3">
    <source>
    </source>
</evidence>
<evidence type="ECO:0000269" key="4">
    <source>
    </source>
</evidence>
<evidence type="ECO:0000269" key="5">
    <source>
    </source>
</evidence>
<evidence type="ECO:0000269" key="6">
    <source>
    </source>
</evidence>
<evidence type="ECO:0000269" key="7">
    <source>
    </source>
</evidence>
<evidence type="ECO:0000305" key="8"/>
<evidence type="ECO:0007744" key="9">
    <source>
        <dbReference type="PDB" id="2AWF"/>
    </source>
</evidence>
<evidence type="ECO:0007744" key="10">
    <source>
    </source>
</evidence>
<evidence type="ECO:0007744" key="11">
    <source>
    </source>
</evidence>
<evidence type="ECO:0007829" key="12">
    <source>
        <dbReference type="PDB" id="2AWF"/>
    </source>
</evidence>
<evidence type="ECO:0007829" key="13">
    <source>
        <dbReference type="PDB" id="6D68"/>
    </source>
</evidence>
<gene>
    <name type="primary">UBE2G1</name>
    <name type="synonym">UBE2G</name>
</gene>
<reference key="1">
    <citation type="journal article" date="1996" name="Cytogenet. Cell Genet.">
        <title>Molecular cloning of UBE2G, encoding a human skeletal muscle-specific ubiquitin-conjugating enzyme homologous to UBC7 of C. elegans.</title>
        <authorList>
            <person name="Watanabe T.K."/>
            <person name="Kawai A."/>
            <person name="Fujiwara T."/>
            <person name="Maekawa H."/>
            <person name="Hirai Y."/>
            <person name="Nakamura Y."/>
            <person name="Takahashi E."/>
        </authorList>
    </citation>
    <scope>NUCLEOTIDE SEQUENCE [MRNA]</scope>
    <scope>TISSUE SPECIFICITY</scope>
    <source>
        <tissue>Fetal brain</tissue>
    </source>
</reference>
<reference key="2">
    <citation type="submission" date="2003-05" db="EMBL/GenBank/DDBJ databases">
        <title>Cloning of human full-length CDSs in BD Creator(TM) system donor vector.</title>
        <authorList>
            <person name="Kalnine N."/>
            <person name="Chen X."/>
            <person name="Rolfs A."/>
            <person name="Halleck A."/>
            <person name="Hines L."/>
            <person name="Eisenstein S."/>
            <person name="Koundinya M."/>
            <person name="Raphael J."/>
            <person name="Moreira D."/>
            <person name="Kelley T."/>
            <person name="LaBaer J."/>
            <person name="Lin Y."/>
            <person name="Phelan M."/>
            <person name="Farmer A."/>
        </authorList>
    </citation>
    <scope>NUCLEOTIDE SEQUENCE [LARGE SCALE MRNA]</scope>
</reference>
<reference key="3">
    <citation type="journal article" date="2004" name="Nat. Genet.">
        <title>Complete sequencing and characterization of 21,243 full-length human cDNAs.</title>
        <authorList>
            <person name="Ota T."/>
            <person name="Suzuki Y."/>
            <person name="Nishikawa T."/>
            <person name="Otsuki T."/>
            <person name="Sugiyama T."/>
            <person name="Irie R."/>
            <person name="Wakamatsu A."/>
            <person name="Hayashi K."/>
            <person name="Sato H."/>
            <person name="Nagai K."/>
            <person name="Kimura K."/>
            <person name="Makita H."/>
            <person name="Sekine M."/>
            <person name="Obayashi M."/>
            <person name="Nishi T."/>
            <person name="Shibahara T."/>
            <person name="Tanaka T."/>
            <person name="Ishii S."/>
            <person name="Yamamoto J."/>
            <person name="Saito K."/>
            <person name="Kawai Y."/>
            <person name="Isono Y."/>
            <person name="Nakamura Y."/>
            <person name="Nagahari K."/>
            <person name="Murakami K."/>
            <person name="Yasuda T."/>
            <person name="Iwayanagi T."/>
            <person name="Wagatsuma M."/>
            <person name="Shiratori A."/>
            <person name="Sudo H."/>
            <person name="Hosoiri T."/>
            <person name="Kaku Y."/>
            <person name="Kodaira H."/>
            <person name="Kondo H."/>
            <person name="Sugawara M."/>
            <person name="Takahashi M."/>
            <person name="Kanda K."/>
            <person name="Yokoi T."/>
            <person name="Furuya T."/>
            <person name="Kikkawa E."/>
            <person name="Omura Y."/>
            <person name="Abe K."/>
            <person name="Kamihara K."/>
            <person name="Katsuta N."/>
            <person name="Sato K."/>
            <person name="Tanikawa M."/>
            <person name="Yamazaki M."/>
            <person name="Ninomiya K."/>
            <person name="Ishibashi T."/>
            <person name="Yamashita H."/>
            <person name="Murakawa K."/>
            <person name="Fujimori K."/>
            <person name="Tanai H."/>
            <person name="Kimata M."/>
            <person name="Watanabe M."/>
            <person name="Hiraoka S."/>
            <person name="Chiba Y."/>
            <person name="Ishida S."/>
            <person name="Ono Y."/>
            <person name="Takiguchi S."/>
            <person name="Watanabe S."/>
            <person name="Yosida M."/>
            <person name="Hotuta T."/>
            <person name="Kusano J."/>
            <person name="Kanehori K."/>
            <person name="Takahashi-Fujii A."/>
            <person name="Hara H."/>
            <person name="Tanase T.-O."/>
            <person name="Nomura Y."/>
            <person name="Togiya S."/>
            <person name="Komai F."/>
            <person name="Hara R."/>
            <person name="Takeuchi K."/>
            <person name="Arita M."/>
            <person name="Imose N."/>
            <person name="Musashino K."/>
            <person name="Yuuki H."/>
            <person name="Oshima A."/>
            <person name="Sasaki N."/>
            <person name="Aotsuka S."/>
            <person name="Yoshikawa Y."/>
            <person name="Matsunawa H."/>
            <person name="Ichihara T."/>
            <person name="Shiohata N."/>
            <person name="Sano S."/>
            <person name="Moriya S."/>
            <person name="Momiyama H."/>
            <person name="Satoh N."/>
            <person name="Takami S."/>
            <person name="Terashima Y."/>
            <person name="Suzuki O."/>
            <person name="Nakagawa S."/>
            <person name="Senoh A."/>
            <person name="Mizoguchi H."/>
            <person name="Goto Y."/>
            <person name="Shimizu F."/>
            <person name="Wakebe H."/>
            <person name="Hishigaki H."/>
            <person name="Watanabe T."/>
            <person name="Sugiyama A."/>
            <person name="Takemoto M."/>
            <person name="Kawakami B."/>
            <person name="Yamazaki M."/>
            <person name="Watanabe K."/>
            <person name="Kumagai A."/>
            <person name="Itakura S."/>
            <person name="Fukuzumi Y."/>
            <person name="Fujimori Y."/>
            <person name="Komiyama M."/>
            <person name="Tashiro H."/>
            <person name="Tanigami A."/>
            <person name="Fujiwara T."/>
            <person name="Ono T."/>
            <person name="Yamada K."/>
            <person name="Fujii Y."/>
            <person name="Ozaki K."/>
            <person name="Hirao M."/>
            <person name="Ohmori Y."/>
            <person name="Kawabata A."/>
            <person name="Hikiji T."/>
            <person name="Kobatake N."/>
            <person name="Inagaki H."/>
            <person name="Ikema Y."/>
            <person name="Okamoto S."/>
            <person name="Okitani R."/>
            <person name="Kawakami T."/>
            <person name="Noguchi S."/>
            <person name="Itoh T."/>
            <person name="Shigeta K."/>
            <person name="Senba T."/>
            <person name="Matsumura K."/>
            <person name="Nakajima Y."/>
            <person name="Mizuno T."/>
            <person name="Morinaga M."/>
            <person name="Sasaki M."/>
            <person name="Togashi T."/>
            <person name="Oyama M."/>
            <person name="Hata H."/>
            <person name="Watanabe M."/>
            <person name="Komatsu T."/>
            <person name="Mizushima-Sugano J."/>
            <person name="Satoh T."/>
            <person name="Shirai Y."/>
            <person name="Takahashi Y."/>
            <person name="Nakagawa K."/>
            <person name="Okumura K."/>
            <person name="Nagase T."/>
            <person name="Nomura N."/>
            <person name="Kikuchi H."/>
            <person name="Masuho Y."/>
            <person name="Yamashita R."/>
            <person name="Nakai K."/>
            <person name="Yada T."/>
            <person name="Nakamura Y."/>
            <person name="Ohara O."/>
            <person name="Isogai T."/>
            <person name="Sugano S."/>
        </authorList>
    </citation>
    <scope>NUCLEOTIDE SEQUENCE [LARGE SCALE MRNA]</scope>
    <source>
        <tissue>Caudate nucleus</tissue>
    </source>
</reference>
<reference key="4">
    <citation type="submission" date="2005-09" db="EMBL/GenBank/DDBJ databases">
        <authorList>
            <person name="Mural R.J."/>
            <person name="Istrail S."/>
            <person name="Sutton G.G."/>
            <person name="Florea L."/>
            <person name="Halpern A.L."/>
            <person name="Mobarry C.M."/>
            <person name="Lippert R."/>
            <person name="Walenz B."/>
            <person name="Shatkay H."/>
            <person name="Dew I."/>
            <person name="Miller J.R."/>
            <person name="Flanigan M.J."/>
            <person name="Edwards N.J."/>
            <person name="Bolanos R."/>
            <person name="Fasulo D."/>
            <person name="Halldorsson B.V."/>
            <person name="Hannenhalli S."/>
            <person name="Turner R."/>
            <person name="Yooseph S."/>
            <person name="Lu F."/>
            <person name="Nusskern D.R."/>
            <person name="Shue B.C."/>
            <person name="Zheng X.H."/>
            <person name="Zhong F."/>
            <person name="Delcher A.L."/>
            <person name="Huson D.H."/>
            <person name="Kravitz S.A."/>
            <person name="Mouchard L."/>
            <person name="Reinert K."/>
            <person name="Remington K.A."/>
            <person name="Clark A.G."/>
            <person name="Waterman M.S."/>
            <person name="Eichler E.E."/>
            <person name="Adams M.D."/>
            <person name="Hunkapiller M.W."/>
            <person name="Myers E.W."/>
            <person name="Venter J.C."/>
        </authorList>
    </citation>
    <scope>NUCLEOTIDE SEQUENCE [LARGE SCALE GENOMIC DNA]</scope>
</reference>
<reference key="5">
    <citation type="journal article" date="2004" name="Genome Res.">
        <title>The status, quality, and expansion of the NIH full-length cDNA project: the Mammalian Gene Collection (MGC).</title>
        <authorList>
            <consortium name="The MGC Project Team"/>
        </authorList>
    </citation>
    <scope>NUCLEOTIDE SEQUENCE [LARGE SCALE MRNA]</scope>
    <source>
        <tissue>Lymph</tissue>
        <tissue>Prostate</tissue>
    </source>
</reference>
<reference key="6">
    <citation type="journal article" date="2003" name="Nat. Biotechnol.">
        <title>Exploring proteomes and analyzing protein processing by mass spectrometric identification of sorted N-terminal peptides.</title>
        <authorList>
            <person name="Gevaert K."/>
            <person name="Goethals M."/>
            <person name="Martens L."/>
            <person name="Van Damme J."/>
            <person name="Staes A."/>
            <person name="Thomas G.R."/>
            <person name="Vandekerckhove J."/>
        </authorList>
    </citation>
    <scope>PROTEIN SEQUENCE OF 2-11</scope>
    <scope>ACETYLATION AT THR-2</scope>
    <source>
        <tissue>Platelet</tissue>
    </source>
</reference>
<reference key="7">
    <citation type="journal article" date="2009" name="Arch. Biochem. Biophys.">
        <title>CYP3A4 ubiquitination by gp78 (the tumor autocrine motility factor receptor, AMFR) and CHIP E3 ligases.</title>
        <authorList>
            <person name="Pabarcus M.K."/>
            <person name="Hoe N."/>
            <person name="Sadeghi S."/>
            <person name="Patterson C."/>
            <person name="Wiertz E."/>
            <person name="Correia M.A."/>
        </authorList>
    </citation>
    <scope>FUNCTION</scope>
</reference>
<reference key="8">
    <citation type="journal article" date="2010" name="J. Biol. Chem.">
        <title>The E2 ubiquitin-conjugating enzymes direct polyubiquitination to preferred lysines.</title>
        <authorList>
            <person name="David Y."/>
            <person name="Ziv T."/>
            <person name="Admon A."/>
            <person name="Navon A."/>
        </authorList>
    </citation>
    <scope>FUNCTION</scope>
    <scope>CATALYTIC ACTIVITY</scope>
</reference>
<reference key="9">
    <citation type="journal article" date="2011" name="BMC Syst. Biol.">
        <title>Initial characterization of the human central proteome.</title>
        <authorList>
            <person name="Burkard T.R."/>
            <person name="Planyavsky M."/>
            <person name="Kaupe I."/>
            <person name="Breitwieser F.P."/>
            <person name="Buerckstuemmer T."/>
            <person name="Bennett K.L."/>
            <person name="Superti-Furga G."/>
            <person name="Colinge J."/>
        </authorList>
    </citation>
    <scope>IDENTIFICATION BY MASS SPECTROMETRY [LARGE SCALE ANALYSIS]</scope>
</reference>
<reference key="10">
    <citation type="journal article" date="2012" name="Mol. Cell. Proteomics">
        <title>Comparative large-scale characterisation of plant vs. mammal proteins reveals similar and idiosyncratic N-alpha acetylation features.</title>
        <authorList>
            <person name="Bienvenut W.V."/>
            <person name="Sumpton D."/>
            <person name="Martinez A."/>
            <person name="Lilla S."/>
            <person name="Espagne C."/>
            <person name="Meinnel T."/>
            <person name="Giglione C."/>
        </authorList>
    </citation>
    <scope>ACETYLATION [LARGE SCALE ANALYSIS] AT THR-2</scope>
    <scope>CLEAVAGE OF INITIATOR METHIONINE [LARGE SCALE ANALYSIS]</scope>
    <scope>IDENTIFICATION BY MASS SPECTROMETRY [LARGE SCALE ANALYSIS]</scope>
</reference>
<reference key="11">
    <citation type="journal article" date="2012" name="Proc. Natl. Acad. Sci. U.S.A.">
        <title>N-terminal acetylome analyses and functional insights of the N-terminal acetyltransferase NatB.</title>
        <authorList>
            <person name="Van Damme P."/>
            <person name="Lasa M."/>
            <person name="Polevoda B."/>
            <person name="Gazquez C."/>
            <person name="Elosegui-Artola A."/>
            <person name="Kim D.S."/>
            <person name="De Juan-Pardo E."/>
            <person name="Demeyer K."/>
            <person name="Hole K."/>
            <person name="Larrea E."/>
            <person name="Timmerman E."/>
            <person name="Prieto J."/>
            <person name="Arnesen T."/>
            <person name="Sherman F."/>
            <person name="Gevaert K."/>
            <person name="Aldabe R."/>
        </authorList>
    </citation>
    <scope>ACETYLATION [LARGE SCALE ANALYSIS] AT MET-1 AND THR-2</scope>
    <scope>CLEAVAGE OF INITIATOR METHIONINE [LARGE SCALE ANALYSIS]</scope>
    <scope>IDENTIFICATION BY MASS SPECTROMETRY [LARGE SCALE ANALYSIS]</scope>
</reference>
<reference evidence="9" key="12">
    <citation type="journal article" date="2012" name="Mol. Cell. Proteomics">
        <title>A human ubiquitin conjugating enzyme (E2)-HECT E3 ligase structure-function screen.</title>
        <authorList>
            <person name="Sheng Y."/>
            <person name="Hong J.H."/>
            <person name="Doherty R."/>
            <person name="Srikumar T."/>
            <person name="Shloush J."/>
            <person name="Avvakumov G.V."/>
            <person name="Walker J.R."/>
            <person name="Xue S."/>
            <person name="Neculai D."/>
            <person name="Wan J.W."/>
            <person name="Kim S.K."/>
            <person name="Arrowsmith C.H."/>
            <person name="Raught B."/>
            <person name="Dhe-Paganon S."/>
        </authorList>
    </citation>
    <scope>X-RAY CRYSTALLOGRAPHY (2.10 ANGSTROMS) OF 8-160</scope>
    <scope>AUTOUBIQUITINATION</scope>
</reference>
<keyword id="KW-0002">3D-structure</keyword>
<keyword id="KW-0007">Acetylation</keyword>
<keyword id="KW-0067">ATP-binding</keyword>
<keyword id="KW-0903">Direct protein sequencing</keyword>
<keyword id="KW-0547">Nucleotide-binding</keyword>
<keyword id="KW-1267">Proteomics identification</keyword>
<keyword id="KW-1185">Reference proteome</keyword>
<keyword id="KW-0808">Transferase</keyword>
<keyword id="KW-0832">Ubl conjugation</keyword>
<keyword id="KW-0833">Ubl conjugation pathway</keyword>
<proteinExistence type="evidence at protein level"/>
<feature type="chain" id="PRO_0000424514" description="Ubiquitin-conjugating enzyme E2 G1">
    <location>
        <begin position="1"/>
        <end position="170"/>
    </location>
</feature>
<feature type="initiator methionine" description="Removed; alternate" evidence="3 10 11">
    <location>
        <position position="1"/>
    </location>
</feature>
<feature type="chain" id="PRO_0000082480" description="Ubiquitin-conjugating enzyme E2 G1, N-terminally processed">
    <location>
        <begin position="2"/>
        <end position="170"/>
    </location>
</feature>
<feature type="domain" description="UBC core" evidence="1">
    <location>
        <begin position="5"/>
        <end position="166"/>
    </location>
</feature>
<feature type="active site" description="Glycyl thioester intermediate" evidence="1 2">
    <location>
        <position position="90"/>
    </location>
</feature>
<feature type="modified residue" description="N-acetylmethionine" evidence="11">
    <location>
        <position position="1"/>
    </location>
</feature>
<feature type="modified residue" description="N-acetylthreonine; in Ubiquitin-conjugating enzyme E2 G1, N-terminally processed" evidence="3 10 11">
    <location>
        <position position="2"/>
    </location>
</feature>
<feature type="helix" evidence="12">
    <location>
        <begin position="8"/>
        <end position="19"/>
    </location>
</feature>
<feature type="strand" evidence="12">
    <location>
        <begin position="25"/>
        <end position="31"/>
    </location>
</feature>
<feature type="strand" evidence="12">
    <location>
        <begin position="37"/>
        <end position="43"/>
    </location>
</feature>
<feature type="turn" evidence="12">
    <location>
        <begin position="49"/>
        <end position="52"/>
    </location>
</feature>
<feature type="strand" evidence="12">
    <location>
        <begin position="54"/>
        <end position="60"/>
    </location>
</feature>
<feature type="turn" evidence="12">
    <location>
        <begin position="63"/>
        <end position="66"/>
    </location>
</feature>
<feature type="strand" evidence="12">
    <location>
        <begin position="71"/>
        <end position="74"/>
    </location>
</feature>
<feature type="strand" evidence="13">
    <location>
        <begin position="87"/>
        <end position="89"/>
    </location>
</feature>
<feature type="helix" evidence="12">
    <location>
        <begin position="92"/>
        <end position="94"/>
    </location>
</feature>
<feature type="helix" evidence="12">
    <location>
        <begin position="117"/>
        <end position="128"/>
    </location>
</feature>
<feature type="helix" evidence="13">
    <location>
        <begin position="139"/>
        <end position="147"/>
    </location>
</feature>
<feature type="turn" evidence="13">
    <location>
        <begin position="149"/>
        <end position="151"/>
    </location>
</feature>
<feature type="helix" evidence="13">
    <location>
        <begin position="152"/>
        <end position="168"/>
    </location>
</feature>
<sequence>MTELQSALLLRRQLAELNKNPVEGFSAGLIDDNDLYRWEVLIIGPPDTLYEGGVFKAHLTFPKDYPLRPPKMKFITEIWHPNVDKNGDVCISILHEPGEDKYGYEKPEERWLPIHTVETIMISVISMLADPNGDSPANVDAAKEWREDRNGEFKRKVARCVRKSQETAFE</sequence>
<organism>
    <name type="scientific">Homo sapiens</name>
    <name type="common">Human</name>
    <dbReference type="NCBI Taxonomy" id="9606"/>
    <lineage>
        <taxon>Eukaryota</taxon>
        <taxon>Metazoa</taxon>
        <taxon>Chordata</taxon>
        <taxon>Craniata</taxon>
        <taxon>Vertebrata</taxon>
        <taxon>Euteleostomi</taxon>
        <taxon>Mammalia</taxon>
        <taxon>Eutheria</taxon>
        <taxon>Euarchontoglires</taxon>
        <taxon>Primates</taxon>
        <taxon>Haplorrhini</taxon>
        <taxon>Catarrhini</taxon>
        <taxon>Hominidae</taxon>
        <taxon>Homo</taxon>
    </lineage>
</organism>